<sequence length="149" mass="16818">MADQLTDEQIAEFKEAFSLFDKDGDGCITTKELGTVMRSLGQNPTEAELQDMINEVDADGNGTIDFPEFLNLMAKKMKDTDSEEELKEAFRVFDKDQNGFISAAELRHVMTNLGEKLTDEEVDEMIREADVDGDGQINYEEFVKVMMAK</sequence>
<evidence type="ECO:0000250" key="1"/>
<evidence type="ECO:0000255" key="2">
    <source>
        <dbReference type="PROSITE-ProRule" id="PRU00448"/>
    </source>
</evidence>
<evidence type="ECO:0000305" key="3"/>
<evidence type="ECO:0000312" key="4">
    <source>
        <dbReference type="EMBL" id="EEE64193.1"/>
    </source>
</evidence>
<feature type="initiator methionine" description="Removed" evidence="1">
    <location>
        <position position="1"/>
    </location>
</feature>
<feature type="chain" id="PRO_0000247889" description="Calmodulin-2">
    <location>
        <begin position="2"/>
        <end position="149"/>
    </location>
</feature>
<feature type="domain" description="EF-hand 1" evidence="2">
    <location>
        <begin position="8"/>
        <end position="43"/>
    </location>
</feature>
<feature type="domain" description="EF-hand 2" evidence="2">
    <location>
        <begin position="44"/>
        <end position="79"/>
    </location>
</feature>
<feature type="domain" description="EF-hand 3" evidence="2">
    <location>
        <begin position="81"/>
        <end position="116"/>
    </location>
</feature>
<feature type="domain" description="EF-hand 4" evidence="2">
    <location>
        <begin position="117"/>
        <end position="149"/>
    </location>
</feature>
<feature type="binding site" evidence="2">
    <location>
        <position position="21"/>
    </location>
    <ligand>
        <name>Ca(2+)</name>
        <dbReference type="ChEBI" id="CHEBI:29108"/>
        <label>1</label>
    </ligand>
</feature>
<feature type="binding site" evidence="2">
    <location>
        <position position="23"/>
    </location>
    <ligand>
        <name>Ca(2+)</name>
        <dbReference type="ChEBI" id="CHEBI:29108"/>
        <label>1</label>
    </ligand>
</feature>
<feature type="binding site" evidence="2">
    <location>
        <position position="25"/>
    </location>
    <ligand>
        <name>Ca(2+)</name>
        <dbReference type="ChEBI" id="CHEBI:29108"/>
        <label>1</label>
    </ligand>
</feature>
<feature type="binding site" evidence="2">
    <location>
        <position position="27"/>
    </location>
    <ligand>
        <name>Ca(2+)</name>
        <dbReference type="ChEBI" id="CHEBI:29108"/>
        <label>1</label>
    </ligand>
</feature>
<feature type="binding site" evidence="2">
    <location>
        <position position="32"/>
    </location>
    <ligand>
        <name>Ca(2+)</name>
        <dbReference type="ChEBI" id="CHEBI:29108"/>
        <label>1</label>
    </ligand>
</feature>
<feature type="binding site" evidence="2">
    <location>
        <position position="57"/>
    </location>
    <ligand>
        <name>Ca(2+)</name>
        <dbReference type="ChEBI" id="CHEBI:29108"/>
        <label>2</label>
    </ligand>
</feature>
<feature type="binding site" evidence="2">
    <location>
        <position position="59"/>
    </location>
    <ligand>
        <name>Ca(2+)</name>
        <dbReference type="ChEBI" id="CHEBI:29108"/>
        <label>2</label>
    </ligand>
</feature>
<feature type="binding site" evidence="2">
    <location>
        <position position="61"/>
    </location>
    <ligand>
        <name>Ca(2+)</name>
        <dbReference type="ChEBI" id="CHEBI:29108"/>
        <label>2</label>
    </ligand>
</feature>
<feature type="binding site" evidence="2">
    <location>
        <position position="63"/>
    </location>
    <ligand>
        <name>Ca(2+)</name>
        <dbReference type="ChEBI" id="CHEBI:29108"/>
        <label>2</label>
    </ligand>
</feature>
<feature type="binding site" evidence="2">
    <location>
        <position position="68"/>
    </location>
    <ligand>
        <name>Ca(2+)</name>
        <dbReference type="ChEBI" id="CHEBI:29108"/>
        <label>2</label>
    </ligand>
</feature>
<feature type="binding site" evidence="2">
    <location>
        <position position="94"/>
    </location>
    <ligand>
        <name>Ca(2+)</name>
        <dbReference type="ChEBI" id="CHEBI:29108"/>
        <label>3</label>
    </ligand>
</feature>
<feature type="binding site" evidence="2">
    <location>
        <position position="96"/>
    </location>
    <ligand>
        <name>Ca(2+)</name>
        <dbReference type="ChEBI" id="CHEBI:29108"/>
        <label>3</label>
    </ligand>
</feature>
<feature type="binding site" evidence="2">
    <location>
        <position position="98"/>
    </location>
    <ligand>
        <name>Ca(2+)</name>
        <dbReference type="ChEBI" id="CHEBI:29108"/>
        <label>3</label>
    </ligand>
</feature>
<feature type="binding site" evidence="2">
    <location>
        <position position="105"/>
    </location>
    <ligand>
        <name>Ca(2+)</name>
        <dbReference type="ChEBI" id="CHEBI:29108"/>
        <label>3</label>
    </ligand>
</feature>
<feature type="binding site" evidence="2">
    <location>
        <position position="130"/>
    </location>
    <ligand>
        <name>Ca(2+)</name>
        <dbReference type="ChEBI" id="CHEBI:29108"/>
        <label>4</label>
    </ligand>
</feature>
<feature type="binding site" evidence="2">
    <location>
        <position position="132"/>
    </location>
    <ligand>
        <name>Ca(2+)</name>
        <dbReference type="ChEBI" id="CHEBI:29108"/>
        <label>4</label>
    </ligand>
</feature>
<feature type="binding site" evidence="2">
    <location>
        <position position="134"/>
    </location>
    <ligand>
        <name>Ca(2+)</name>
        <dbReference type="ChEBI" id="CHEBI:29108"/>
        <label>4</label>
    </ligand>
</feature>
<feature type="binding site" evidence="2">
    <location>
        <position position="136"/>
    </location>
    <ligand>
        <name>Ca(2+)</name>
        <dbReference type="ChEBI" id="CHEBI:29108"/>
        <label>4</label>
    </ligand>
</feature>
<feature type="binding site" evidence="2">
    <location>
        <position position="141"/>
    </location>
    <ligand>
        <name>Ca(2+)</name>
        <dbReference type="ChEBI" id="CHEBI:29108"/>
        <label>4</label>
    </ligand>
</feature>
<feature type="modified residue" description="N-acetylalanine" evidence="1">
    <location>
        <position position="2"/>
    </location>
</feature>
<feature type="modified residue" description="N6,N6,N6-trimethyllysine" evidence="1">
    <location>
        <position position="116"/>
    </location>
</feature>
<feature type="sequence conflict" description="In Ref. 1; CAA46150." evidence="3" ref="1">
    <original>K</original>
    <variation>R</variation>
    <location>
        <position position="75"/>
    </location>
</feature>
<gene>
    <name type="primary">CAM2</name>
    <name type="synonym">CAM</name>
    <name type="ordered locus">Os05g0491100</name>
    <name type="ordered locus">LOC_Os05g41210</name>
    <name type="ORF">OsJ_018255</name>
    <name evidence="4" type="ORF">OsJ_19025</name>
    <name type="ORF">OSJNBa0088I06.9</name>
</gene>
<name>CALM2_ORYSJ</name>
<reference key="1">
    <citation type="journal article" date="1993" name="Chin. J. Biotechnol.">
        <title>Cloning and structural analysis of calmodulin gene from rice.</title>
        <authorList>
            <person name="Liu Z.H."/>
            <person name="Wu X.Y."/>
            <person name="Pan N.S."/>
            <person name="Chen Z.L."/>
        </authorList>
    </citation>
    <scope>NUCLEOTIDE SEQUENCE [MRNA]</scope>
    <source>
        <tissue>Leaf</tissue>
    </source>
</reference>
<reference key="2">
    <citation type="submission" date="1998-01" db="EMBL/GenBank/DDBJ databases">
        <authorList>
            <person name="Choi Y.J."/>
            <person name="Kim C.Y."/>
            <person name="Cheon S.Y."/>
            <person name="Cho M.J."/>
        </authorList>
    </citation>
    <scope>NUCLEOTIDE SEQUENCE [MRNA]</scope>
</reference>
<reference key="3">
    <citation type="submission" date="2001-10" db="EMBL/GenBank/DDBJ databases">
        <title>The characterization of a rice CaM-binding protein kinase.</title>
        <authorList>
            <person name="Zhang L."/>
            <person name="Lu Y.-T."/>
        </authorList>
    </citation>
    <scope>NUCLEOTIDE SEQUENCE [MRNA]</scope>
</reference>
<reference key="4">
    <citation type="journal article" date="2005" name="Mol. Genet. Genomics">
        <title>A fine physical map of the rice chromosome 5.</title>
        <authorList>
            <person name="Cheng C.-H."/>
            <person name="Chung M.C."/>
            <person name="Liu S.-M."/>
            <person name="Chen S.-K."/>
            <person name="Kao F.Y."/>
            <person name="Lin S.-J."/>
            <person name="Hsiao S.-H."/>
            <person name="Tseng I.C."/>
            <person name="Hsing Y.-I.C."/>
            <person name="Wu H.-P."/>
            <person name="Chen C.-S."/>
            <person name="Shaw J.-F."/>
            <person name="Wu J."/>
            <person name="Matsumoto T."/>
            <person name="Sasaki T."/>
            <person name="Chen H.-C."/>
            <person name="Chow T.-Y."/>
        </authorList>
    </citation>
    <scope>NUCLEOTIDE SEQUENCE [LARGE SCALE GENOMIC DNA]</scope>
    <source>
        <strain>cv. Nipponbare</strain>
    </source>
</reference>
<reference key="5">
    <citation type="journal article" date="2005" name="Nature">
        <title>The map-based sequence of the rice genome.</title>
        <authorList>
            <consortium name="International rice genome sequencing project (IRGSP)"/>
        </authorList>
    </citation>
    <scope>NUCLEOTIDE SEQUENCE [LARGE SCALE GENOMIC DNA]</scope>
    <source>
        <strain>cv. Nipponbare</strain>
    </source>
</reference>
<reference key="6">
    <citation type="journal article" date="2008" name="Nucleic Acids Res.">
        <title>The rice annotation project database (RAP-DB): 2008 update.</title>
        <authorList>
            <consortium name="The rice annotation project (RAP)"/>
        </authorList>
    </citation>
    <scope>GENOME REANNOTATION</scope>
    <source>
        <strain>cv. Nipponbare</strain>
    </source>
</reference>
<reference key="7">
    <citation type="journal article" date="2013" name="Rice">
        <title>Improvement of the Oryza sativa Nipponbare reference genome using next generation sequence and optical map data.</title>
        <authorList>
            <person name="Kawahara Y."/>
            <person name="de la Bastide M."/>
            <person name="Hamilton J.P."/>
            <person name="Kanamori H."/>
            <person name="McCombie W.R."/>
            <person name="Ouyang S."/>
            <person name="Schwartz D.C."/>
            <person name="Tanaka T."/>
            <person name="Wu J."/>
            <person name="Zhou S."/>
            <person name="Childs K.L."/>
            <person name="Davidson R.M."/>
            <person name="Lin H."/>
            <person name="Quesada-Ocampo L."/>
            <person name="Vaillancourt B."/>
            <person name="Sakai H."/>
            <person name="Lee S.S."/>
            <person name="Kim J."/>
            <person name="Numa H."/>
            <person name="Itoh T."/>
            <person name="Buell C.R."/>
            <person name="Matsumoto T."/>
        </authorList>
    </citation>
    <scope>GENOME REANNOTATION</scope>
    <source>
        <strain>cv. Nipponbare</strain>
    </source>
</reference>
<reference key="8">
    <citation type="journal article" date="2005" name="PLoS Biol.">
        <title>The genomes of Oryza sativa: a history of duplications.</title>
        <authorList>
            <person name="Yu J."/>
            <person name="Wang J."/>
            <person name="Lin W."/>
            <person name="Li S."/>
            <person name="Li H."/>
            <person name="Zhou J."/>
            <person name="Ni P."/>
            <person name="Dong W."/>
            <person name="Hu S."/>
            <person name="Zeng C."/>
            <person name="Zhang J."/>
            <person name="Zhang Y."/>
            <person name="Li R."/>
            <person name="Xu Z."/>
            <person name="Li S."/>
            <person name="Li X."/>
            <person name="Zheng H."/>
            <person name="Cong L."/>
            <person name="Lin L."/>
            <person name="Yin J."/>
            <person name="Geng J."/>
            <person name="Li G."/>
            <person name="Shi J."/>
            <person name="Liu J."/>
            <person name="Lv H."/>
            <person name="Li J."/>
            <person name="Wang J."/>
            <person name="Deng Y."/>
            <person name="Ran L."/>
            <person name="Shi X."/>
            <person name="Wang X."/>
            <person name="Wu Q."/>
            <person name="Li C."/>
            <person name="Ren X."/>
            <person name="Wang J."/>
            <person name="Wang X."/>
            <person name="Li D."/>
            <person name="Liu D."/>
            <person name="Zhang X."/>
            <person name="Ji Z."/>
            <person name="Zhao W."/>
            <person name="Sun Y."/>
            <person name="Zhang Z."/>
            <person name="Bao J."/>
            <person name="Han Y."/>
            <person name="Dong L."/>
            <person name="Ji J."/>
            <person name="Chen P."/>
            <person name="Wu S."/>
            <person name="Liu J."/>
            <person name="Xiao Y."/>
            <person name="Bu D."/>
            <person name="Tan J."/>
            <person name="Yang L."/>
            <person name="Ye C."/>
            <person name="Zhang J."/>
            <person name="Xu J."/>
            <person name="Zhou Y."/>
            <person name="Yu Y."/>
            <person name="Zhang B."/>
            <person name="Zhuang S."/>
            <person name="Wei H."/>
            <person name="Liu B."/>
            <person name="Lei M."/>
            <person name="Yu H."/>
            <person name="Li Y."/>
            <person name="Xu H."/>
            <person name="Wei S."/>
            <person name="He X."/>
            <person name="Fang L."/>
            <person name="Zhang Z."/>
            <person name="Zhang Y."/>
            <person name="Huang X."/>
            <person name="Su Z."/>
            <person name="Tong W."/>
            <person name="Li J."/>
            <person name="Tong Z."/>
            <person name="Li S."/>
            <person name="Ye J."/>
            <person name="Wang L."/>
            <person name="Fang L."/>
            <person name="Lei T."/>
            <person name="Chen C.-S."/>
            <person name="Chen H.-C."/>
            <person name="Xu Z."/>
            <person name="Li H."/>
            <person name="Huang H."/>
            <person name="Zhang F."/>
            <person name="Xu H."/>
            <person name="Li N."/>
            <person name="Zhao C."/>
            <person name="Li S."/>
            <person name="Dong L."/>
            <person name="Huang Y."/>
            <person name="Li L."/>
            <person name="Xi Y."/>
            <person name="Qi Q."/>
            <person name="Li W."/>
            <person name="Zhang B."/>
            <person name="Hu W."/>
            <person name="Zhang Y."/>
            <person name="Tian X."/>
            <person name="Jiao Y."/>
            <person name="Liang X."/>
            <person name="Jin J."/>
            <person name="Gao L."/>
            <person name="Zheng W."/>
            <person name="Hao B."/>
            <person name="Liu S.-M."/>
            <person name="Wang W."/>
            <person name="Yuan L."/>
            <person name="Cao M."/>
            <person name="McDermott J."/>
            <person name="Samudrala R."/>
            <person name="Wang J."/>
            <person name="Wong G.K.-S."/>
            <person name="Yang H."/>
        </authorList>
    </citation>
    <scope>NUCLEOTIDE SEQUENCE [LARGE SCALE GENOMIC DNA]</scope>
    <source>
        <strain>cv. Nipponbare</strain>
    </source>
</reference>
<reference key="9">
    <citation type="journal article" date="2003" name="Science">
        <title>Collection, mapping, and annotation of over 28,000 cDNA clones from japonica rice.</title>
        <authorList>
            <consortium name="The rice full-length cDNA consortium"/>
        </authorList>
    </citation>
    <scope>NUCLEOTIDE SEQUENCE [LARGE SCALE MRNA]</scope>
    <source>
        <strain>cv. Nipponbare</strain>
    </source>
</reference>
<reference key="10">
    <citation type="journal article" date="2007" name="BMC Plant Biol.">
        <title>Genome-wide identification and analyses of the rice calmodulin and related potential calcium sensor proteins.</title>
        <authorList>
            <person name="Boonburapong B."/>
            <person name="Buaboocha T."/>
        </authorList>
    </citation>
    <scope>GENE FAMILY</scope>
    <scope>NOMENCLATURE</scope>
</reference>
<comment type="function">
    <text>Calmodulin mediates the control of a large number of enzymes, ion channels and other proteins by Ca(2+). Among the enzymes to be stimulated by the calmodulin-Ca(2+) complex are a number of protein kinases and phosphatases.</text>
</comment>
<comment type="miscellaneous">
    <text>This protein has four functional calcium-binding sites.</text>
</comment>
<comment type="similarity">
    <text evidence="3">Belongs to the calmodulin family.</text>
</comment>
<keyword id="KW-0007">Acetylation</keyword>
<keyword id="KW-0106">Calcium</keyword>
<keyword id="KW-0479">Metal-binding</keyword>
<keyword id="KW-0488">Methylation</keyword>
<keyword id="KW-1185">Reference proteome</keyword>
<keyword id="KW-0677">Repeat</keyword>
<protein>
    <recommendedName>
        <fullName>Calmodulin-2</fullName>
        <shortName>CaM-2</shortName>
    </recommendedName>
</protein>
<organism>
    <name type="scientific">Oryza sativa subsp. japonica</name>
    <name type="common">Rice</name>
    <dbReference type="NCBI Taxonomy" id="39947"/>
    <lineage>
        <taxon>Eukaryota</taxon>
        <taxon>Viridiplantae</taxon>
        <taxon>Streptophyta</taxon>
        <taxon>Embryophyta</taxon>
        <taxon>Tracheophyta</taxon>
        <taxon>Spermatophyta</taxon>
        <taxon>Magnoliopsida</taxon>
        <taxon>Liliopsida</taxon>
        <taxon>Poales</taxon>
        <taxon>Poaceae</taxon>
        <taxon>BOP clade</taxon>
        <taxon>Oryzoideae</taxon>
        <taxon>Oryzeae</taxon>
        <taxon>Oryzinae</taxon>
        <taxon>Oryza</taxon>
        <taxon>Oryza sativa</taxon>
    </lineage>
</organism>
<accession>Q6F332</accession>
<accession>B7E3S6</accession>
<accession>O49183</accession>
<accession>P29612</accession>
<accession>Q0DH52</accession>
<proteinExistence type="evidence at transcript level"/>
<dbReference type="EMBL" id="X65016">
    <property type="protein sequence ID" value="CAA46150.1"/>
    <property type="molecule type" value="mRNA"/>
</dbReference>
<dbReference type="EMBL" id="AF042839">
    <property type="protein sequence ID" value="AAC36058.1"/>
    <property type="molecule type" value="mRNA"/>
</dbReference>
<dbReference type="EMBL" id="AF441190">
    <property type="protein sequence ID" value="AAL35328.1"/>
    <property type="molecule type" value="mRNA"/>
</dbReference>
<dbReference type="EMBL" id="AC129718">
    <property type="protein sequence ID" value="AAT69643.1"/>
    <property type="molecule type" value="Genomic_DNA"/>
</dbReference>
<dbReference type="EMBL" id="AP008211">
    <property type="protein sequence ID" value="BAF17821.1"/>
    <property type="molecule type" value="Genomic_DNA"/>
</dbReference>
<dbReference type="EMBL" id="AP014961">
    <property type="protein sequence ID" value="BAS94663.1"/>
    <property type="molecule type" value="Genomic_DNA"/>
</dbReference>
<dbReference type="EMBL" id="CM000142">
    <property type="protein sequence ID" value="EAZ34772.1"/>
    <property type="molecule type" value="Genomic_DNA"/>
</dbReference>
<dbReference type="EMBL" id="CM000142">
    <property type="protein sequence ID" value="EEE64193.1"/>
    <property type="molecule type" value="Genomic_DNA"/>
</dbReference>
<dbReference type="EMBL" id="AK059534">
    <property type="protein sequence ID" value="BAG87023.1"/>
    <property type="molecule type" value="mRNA"/>
</dbReference>
<dbReference type="EMBL" id="AK119167">
    <property type="protein sequence ID" value="BAG99558.1"/>
    <property type="molecule type" value="mRNA"/>
</dbReference>
<dbReference type="EMBL" id="AK121606">
    <property type="protein sequence ID" value="BAH00572.1"/>
    <property type="molecule type" value="mRNA"/>
</dbReference>
<dbReference type="PIR" id="JC1094">
    <property type="entry name" value="JC1094"/>
</dbReference>
<dbReference type="RefSeq" id="XP_015639161.1">
    <property type="nucleotide sequence ID" value="XM_015783675.1"/>
</dbReference>
<dbReference type="SMR" id="Q6F332"/>
<dbReference type="FunCoup" id="Q6F332">
    <property type="interactions" value="2700"/>
</dbReference>
<dbReference type="STRING" id="39947.Q6F332"/>
<dbReference type="PaxDb" id="39947-Q6F332"/>
<dbReference type="EnsemblPlants" id="Os05t0491100-01">
    <property type="protein sequence ID" value="Os05t0491100-01"/>
    <property type="gene ID" value="Os05g0491100"/>
</dbReference>
<dbReference type="EnsemblPlants" id="Os05t0491100-02">
    <property type="protein sequence ID" value="Os05t0491100-02"/>
    <property type="gene ID" value="Os05g0491100"/>
</dbReference>
<dbReference type="Gramene" id="Os05t0491100-01">
    <property type="protein sequence ID" value="Os05t0491100-01"/>
    <property type="gene ID" value="Os05g0491100"/>
</dbReference>
<dbReference type="Gramene" id="Os05t0491100-02">
    <property type="protein sequence ID" value="Os05t0491100-02"/>
    <property type="gene ID" value="Os05g0491100"/>
</dbReference>
<dbReference type="KEGG" id="dosa:Os05g0491100"/>
<dbReference type="eggNOG" id="KOG0027">
    <property type="taxonomic scope" value="Eukaryota"/>
</dbReference>
<dbReference type="HOGENOM" id="CLU_061288_2_0_1"/>
<dbReference type="InParanoid" id="Q6F332"/>
<dbReference type="OMA" id="RIDCESI"/>
<dbReference type="OrthoDB" id="727752at2759"/>
<dbReference type="Proteomes" id="UP000000763">
    <property type="component" value="Chromosome 5"/>
</dbReference>
<dbReference type="Proteomes" id="UP000007752">
    <property type="component" value="Chromosome 5"/>
</dbReference>
<dbReference type="Proteomes" id="UP000059680">
    <property type="component" value="Chromosome 5"/>
</dbReference>
<dbReference type="GO" id="GO:0005737">
    <property type="term" value="C:cytoplasm"/>
    <property type="evidence" value="ECO:0000318"/>
    <property type="project" value="GO_Central"/>
</dbReference>
<dbReference type="GO" id="GO:0005509">
    <property type="term" value="F:calcium ion binding"/>
    <property type="evidence" value="ECO:0000318"/>
    <property type="project" value="GO_Central"/>
</dbReference>
<dbReference type="GO" id="GO:0030234">
    <property type="term" value="F:enzyme regulator activity"/>
    <property type="evidence" value="ECO:0000318"/>
    <property type="project" value="GO_Central"/>
</dbReference>
<dbReference type="CDD" id="cd00051">
    <property type="entry name" value="EFh"/>
    <property type="match status" value="2"/>
</dbReference>
<dbReference type="FunFam" id="1.10.238.10:FF:000034">
    <property type="entry name" value="Calmodulin"/>
    <property type="match status" value="1"/>
</dbReference>
<dbReference type="FunFam" id="1.10.238.10:FF:000042">
    <property type="entry name" value="Calmodulin"/>
    <property type="match status" value="1"/>
</dbReference>
<dbReference type="Gene3D" id="1.10.238.10">
    <property type="entry name" value="EF-hand"/>
    <property type="match status" value="3"/>
</dbReference>
<dbReference type="InterPro" id="IPR050230">
    <property type="entry name" value="CALM/Myosin/TropC-like"/>
</dbReference>
<dbReference type="InterPro" id="IPR011992">
    <property type="entry name" value="EF-hand-dom_pair"/>
</dbReference>
<dbReference type="InterPro" id="IPR018247">
    <property type="entry name" value="EF_Hand_1_Ca_BS"/>
</dbReference>
<dbReference type="InterPro" id="IPR002048">
    <property type="entry name" value="EF_hand_dom"/>
</dbReference>
<dbReference type="PANTHER" id="PTHR23048:SF53">
    <property type="entry name" value="CALMODULIN"/>
    <property type="match status" value="1"/>
</dbReference>
<dbReference type="PANTHER" id="PTHR23048">
    <property type="entry name" value="MYOSIN LIGHT CHAIN 1, 3"/>
    <property type="match status" value="1"/>
</dbReference>
<dbReference type="Pfam" id="PF13499">
    <property type="entry name" value="EF-hand_7"/>
    <property type="match status" value="2"/>
</dbReference>
<dbReference type="SMART" id="SM00054">
    <property type="entry name" value="EFh"/>
    <property type="match status" value="4"/>
</dbReference>
<dbReference type="SUPFAM" id="SSF47473">
    <property type="entry name" value="EF-hand"/>
    <property type="match status" value="1"/>
</dbReference>
<dbReference type="PROSITE" id="PS00018">
    <property type="entry name" value="EF_HAND_1"/>
    <property type="match status" value="4"/>
</dbReference>
<dbReference type="PROSITE" id="PS50222">
    <property type="entry name" value="EF_HAND_2"/>
    <property type="match status" value="4"/>
</dbReference>